<keyword id="KW-0067">ATP-binding</keyword>
<keyword id="KW-0143">Chaperone</keyword>
<keyword id="KW-0963">Cytoplasm</keyword>
<keyword id="KW-0547">Nucleotide-binding</keyword>
<keyword id="KW-1185">Reference proteome</keyword>
<keyword id="KW-0346">Stress response</keyword>
<dbReference type="EMBL" id="BX950851">
    <property type="protein sequence ID" value="CAG74089.1"/>
    <property type="status" value="ALT_INIT"/>
    <property type="molecule type" value="Genomic_DNA"/>
</dbReference>
<dbReference type="SMR" id="Q6D7Z6"/>
<dbReference type="STRING" id="218491.ECA1179"/>
<dbReference type="KEGG" id="eca:ECA1179"/>
<dbReference type="eggNOG" id="COG0326">
    <property type="taxonomic scope" value="Bacteria"/>
</dbReference>
<dbReference type="HOGENOM" id="CLU_006684_3_0_6"/>
<dbReference type="Proteomes" id="UP000007966">
    <property type="component" value="Chromosome"/>
</dbReference>
<dbReference type="GO" id="GO:0005737">
    <property type="term" value="C:cytoplasm"/>
    <property type="evidence" value="ECO:0007669"/>
    <property type="project" value="UniProtKB-SubCell"/>
</dbReference>
<dbReference type="GO" id="GO:0005524">
    <property type="term" value="F:ATP binding"/>
    <property type="evidence" value="ECO:0007669"/>
    <property type="project" value="UniProtKB-UniRule"/>
</dbReference>
<dbReference type="GO" id="GO:0016887">
    <property type="term" value="F:ATP hydrolysis activity"/>
    <property type="evidence" value="ECO:0007669"/>
    <property type="project" value="InterPro"/>
</dbReference>
<dbReference type="GO" id="GO:0140662">
    <property type="term" value="F:ATP-dependent protein folding chaperone"/>
    <property type="evidence" value="ECO:0007669"/>
    <property type="project" value="InterPro"/>
</dbReference>
<dbReference type="GO" id="GO:0051082">
    <property type="term" value="F:unfolded protein binding"/>
    <property type="evidence" value="ECO:0007669"/>
    <property type="project" value="UniProtKB-UniRule"/>
</dbReference>
<dbReference type="CDD" id="cd16927">
    <property type="entry name" value="HATPase_Hsp90-like"/>
    <property type="match status" value="1"/>
</dbReference>
<dbReference type="FunFam" id="1.20.120.790:FF:000002">
    <property type="entry name" value="Molecular chaperone HtpG"/>
    <property type="match status" value="1"/>
</dbReference>
<dbReference type="FunFam" id="3.30.230.80:FF:000002">
    <property type="entry name" value="Molecular chaperone HtpG"/>
    <property type="match status" value="1"/>
</dbReference>
<dbReference type="FunFam" id="3.30.565.10:FF:000009">
    <property type="entry name" value="Molecular chaperone HtpG"/>
    <property type="match status" value="1"/>
</dbReference>
<dbReference type="FunFam" id="3.40.50.11260:FF:000002">
    <property type="entry name" value="Molecular chaperone HtpG"/>
    <property type="match status" value="1"/>
</dbReference>
<dbReference type="Gene3D" id="3.30.230.80">
    <property type="match status" value="1"/>
</dbReference>
<dbReference type="Gene3D" id="3.40.50.11260">
    <property type="match status" value="1"/>
</dbReference>
<dbReference type="Gene3D" id="1.20.120.790">
    <property type="entry name" value="Heat shock protein 90, C-terminal domain"/>
    <property type="match status" value="1"/>
</dbReference>
<dbReference type="Gene3D" id="3.30.565.10">
    <property type="entry name" value="Histidine kinase-like ATPase, C-terminal domain"/>
    <property type="match status" value="1"/>
</dbReference>
<dbReference type="HAMAP" id="MF_00505">
    <property type="entry name" value="HSP90"/>
    <property type="match status" value="1"/>
</dbReference>
<dbReference type="InterPro" id="IPR036890">
    <property type="entry name" value="HATPase_C_sf"/>
</dbReference>
<dbReference type="InterPro" id="IPR019805">
    <property type="entry name" value="Heat_shock_protein_90_CS"/>
</dbReference>
<dbReference type="InterPro" id="IPR037196">
    <property type="entry name" value="HSP90_C"/>
</dbReference>
<dbReference type="InterPro" id="IPR001404">
    <property type="entry name" value="Hsp90_fam"/>
</dbReference>
<dbReference type="InterPro" id="IPR020575">
    <property type="entry name" value="Hsp90_N"/>
</dbReference>
<dbReference type="InterPro" id="IPR020568">
    <property type="entry name" value="Ribosomal_Su5_D2-typ_SF"/>
</dbReference>
<dbReference type="NCBIfam" id="NF003555">
    <property type="entry name" value="PRK05218.1"/>
    <property type="match status" value="1"/>
</dbReference>
<dbReference type="PANTHER" id="PTHR11528">
    <property type="entry name" value="HEAT SHOCK PROTEIN 90 FAMILY MEMBER"/>
    <property type="match status" value="1"/>
</dbReference>
<dbReference type="Pfam" id="PF13589">
    <property type="entry name" value="HATPase_c_3"/>
    <property type="match status" value="1"/>
</dbReference>
<dbReference type="Pfam" id="PF00183">
    <property type="entry name" value="HSP90"/>
    <property type="match status" value="1"/>
</dbReference>
<dbReference type="PIRSF" id="PIRSF002583">
    <property type="entry name" value="Hsp90"/>
    <property type="match status" value="1"/>
</dbReference>
<dbReference type="PRINTS" id="PR00775">
    <property type="entry name" value="HEATSHOCK90"/>
</dbReference>
<dbReference type="SMART" id="SM00387">
    <property type="entry name" value="HATPase_c"/>
    <property type="match status" value="1"/>
</dbReference>
<dbReference type="SUPFAM" id="SSF55874">
    <property type="entry name" value="ATPase domain of HSP90 chaperone/DNA topoisomerase II/histidine kinase"/>
    <property type="match status" value="1"/>
</dbReference>
<dbReference type="SUPFAM" id="SSF110942">
    <property type="entry name" value="HSP90 C-terminal domain"/>
    <property type="match status" value="1"/>
</dbReference>
<dbReference type="SUPFAM" id="SSF54211">
    <property type="entry name" value="Ribosomal protein S5 domain 2-like"/>
    <property type="match status" value="1"/>
</dbReference>
<dbReference type="PROSITE" id="PS00298">
    <property type="entry name" value="HSP90"/>
    <property type="match status" value="1"/>
</dbReference>
<feature type="chain" id="PRO_0000224207" description="Chaperone protein HtpG">
    <location>
        <begin position="1"/>
        <end position="627"/>
    </location>
</feature>
<feature type="region of interest" description="A; substrate-binding" evidence="1">
    <location>
        <begin position="1"/>
        <end position="339"/>
    </location>
</feature>
<feature type="region of interest" description="B" evidence="1">
    <location>
        <begin position="340"/>
        <end position="555"/>
    </location>
</feature>
<feature type="region of interest" description="C" evidence="1">
    <location>
        <begin position="556"/>
        <end position="627"/>
    </location>
</feature>
<evidence type="ECO:0000255" key="1">
    <source>
        <dbReference type="HAMAP-Rule" id="MF_00505"/>
    </source>
</evidence>
<evidence type="ECO:0000305" key="2"/>
<comment type="function">
    <text evidence="1">Molecular chaperone. Has ATPase activity.</text>
</comment>
<comment type="subunit">
    <text evidence="1">Homodimer.</text>
</comment>
<comment type="subcellular location">
    <subcellularLocation>
        <location evidence="1">Cytoplasm</location>
    </subcellularLocation>
</comment>
<comment type="similarity">
    <text evidence="1">Belongs to the heat shock protein 90 family.</text>
</comment>
<comment type="sequence caution" evidence="2">
    <conflict type="erroneous initiation">
        <sequence resource="EMBL-CDS" id="CAG74089"/>
    </conflict>
</comment>
<name>HTPG_PECAS</name>
<accession>Q6D7Z6</accession>
<protein>
    <recommendedName>
        <fullName evidence="1">Chaperone protein HtpG</fullName>
    </recommendedName>
    <alternativeName>
        <fullName evidence="1">Heat shock protein HtpG</fullName>
    </alternativeName>
    <alternativeName>
        <fullName evidence="1">High temperature protein G</fullName>
    </alternativeName>
</protein>
<reference key="1">
    <citation type="journal article" date="2004" name="Proc. Natl. Acad. Sci. U.S.A.">
        <title>Genome sequence of the enterobacterial phytopathogen Erwinia carotovora subsp. atroseptica and characterization of virulence factors.</title>
        <authorList>
            <person name="Bell K.S."/>
            <person name="Sebaihia M."/>
            <person name="Pritchard L."/>
            <person name="Holden M.T.G."/>
            <person name="Hyman L.J."/>
            <person name="Holeva M.C."/>
            <person name="Thomson N.R."/>
            <person name="Bentley S.D."/>
            <person name="Churcher L.J.C."/>
            <person name="Mungall K."/>
            <person name="Atkin R."/>
            <person name="Bason N."/>
            <person name="Brooks K."/>
            <person name="Chillingworth T."/>
            <person name="Clark K."/>
            <person name="Doggett J."/>
            <person name="Fraser A."/>
            <person name="Hance Z."/>
            <person name="Hauser H."/>
            <person name="Jagels K."/>
            <person name="Moule S."/>
            <person name="Norbertczak H."/>
            <person name="Ormond D."/>
            <person name="Price C."/>
            <person name="Quail M.A."/>
            <person name="Sanders M."/>
            <person name="Walker D."/>
            <person name="Whitehead S."/>
            <person name="Salmond G.P.C."/>
            <person name="Birch P.R.J."/>
            <person name="Parkhill J."/>
            <person name="Toth I.K."/>
        </authorList>
    </citation>
    <scope>NUCLEOTIDE SEQUENCE [LARGE SCALE GENOMIC DNA]</scope>
    <source>
        <strain>SCRI 1043 / ATCC BAA-672</strain>
    </source>
</reference>
<sequence>MKGQETRGFQSEVKQLLHLMIHSLYSNKEIFLRELISNASDAADKLRFRALSTPELYAGDGDLRVRVSTDKEKRTLTISDNGIGMSRDEVIDNLGTIAKSGTKSFLESMGSDQVKDSQLIGQFGVGFYSAFIVADKVTVRTRAAGANADQGVYWESAGEGDYTIADITKDDRGTEITLHLREGEDEFLDDWRVRSVISKYSDHIALPVEIESQTESEEEGGESTVSWEKINKAQALWTRSKSEVSDDEYNEFYKHISHDFTDPLSWSHNRVEGKQEYTSLLYIPAHAPWDMWNRDHKHGLKLYVQRVFIMDDAEQFMPNYLRFVRGLIDSNDLPLNVSREILQDSRVTQNLRNALTKRVLQMLDKLAKDDAEKYQTFWQQFGLVLKEGPAEDGSNREAIAKLLRFATTQSDSSAQTVSLEDYVSRMVEGQDKIYYITADSYAAAKSSPHLELFRKKGIEVLLLSERIDEWMMSYLTEFDGKSFQSVSKADDTLDKLADEENDAQKEAQKALEPFVERVKTLLGERVKDVRFTYRLTDTPAIVVTDADEMSTQMAKLFAAAGQQAPEVKYIFELNPEHALIKRAADVSDEAEFGEWVELLLDQALLAERGTLDDPNLFIRRMNQLLSA</sequence>
<gene>
    <name evidence="1" type="primary">htpG</name>
    <name type="ordered locus">ECA1179</name>
</gene>
<proteinExistence type="inferred from homology"/>
<organism>
    <name type="scientific">Pectobacterium atrosepticum (strain SCRI 1043 / ATCC BAA-672)</name>
    <name type="common">Erwinia carotovora subsp. atroseptica</name>
    <dbReference type="NCBI Taxonomy" id="218491"/>
    <lineage>
        <taxon>Bacteria</taxon>
        <taxon>Pseudomonadati</taxon>
        <taxon>Pseudomonadota</taxon>
        <taxon>Gammaproteobacteria</taxon>
        <taxon>Enterobacterales</taxon>
        <taxon>Pectobacteriaceae</taxon>
        <taxon>Pectobacterium</taxon>
    </lineage>
</organism>